<gene>
    <name evidence="1" type="primary">ndhN</name>
    <name type="ordered locus">Tery_3013</name>
</gene>
<proteinExistence type="inferred from homology"/>
<reference key="1">
    <citation type="journal article" date="2015" name="Proc. Natl. Acad. Sci. U.S.A.">
        <title>Trichodesmium genome maintains abundant, widespread noncoding DNA in situ, despite oligotrophic lifestyle.</title>
        <authorList>
            <person name="Walworth N."/>
            <person name="Pfreundt U."/>
            <person name="Nelson W.C."/>
            <person name="Mincer T."/>
            <person name="Heidelberg J.F."/>
            <person name="Fu F."/>
            <person name="Waterbury J.B."/>
            <person name="Glavina del Rio T."/>
            <person name="Goodwin L."/>
            <person name="Kyrpides N.C."/>
            <person name="Land M.L."/>
            <person name="Woyke T."/>
            <person name="Hutchins D.A."/>
            <person name="Hess W.R."/>
            <person name="Webb E.A."/>
        </authorList>
    </citation>
    <scope>NUCLEOTIDE SEQUENCE [LARGE SCALE GENOMIC DNA]</scope>
    <source>
        <strain>IMS101</strain>
    </source>
</reference>
<evidence type="ECO:0000255" key="1">
    <source>
        <dbReference type="HAMAP-Rule" id="MF_01353"/>
    </source>
</evidence>
<feature type="chain" id="PRO_0000352244" description="NAD(P)H-quinone oxidoreductase subunit N">
    <location>
        <begin position="1"/>
        <end position="158"/>
    </location>
</feature>
<name>NDHN_TRIEI</name>
<organism>
    <name type="scientific">Trichodesmium erythraeum (strain IMS101)</name>
    <dbReference type="NCBI Taxonomy" id="203124"/>
    <lineage>
        <taxon>Bacteria</taxon>
        <taxon>Bacillati</taxon>
        <taxon>Cyanobacteriota</taxon>
        <taxon>Cyanophyceae</taxon>
        <taxon>Oscillatoriophycideae</taxon>
        <taxon>Oscillatoriales</taxon>
        <taxon>Microcoleaceae</taxon>
        <taxon>Trichodesmium</taxon>
    </lineage>
</organism>
<sequence>MALITTGRGMIRDLEKSGSLAVYPPLEGGFEGRYQRRLRASGYVSESITARGLGDLAMYLTGVHGVRPPHLGKKTVGNGPAVGYVYYVPPIVNYKLEHLPPKAKGLVLWIMEGQILSSQEIEYLTVLPKSEPRVKVIVEMGGDRFFRWTPLQNTLVPA</sequence>
<accession>Q110A6</accession>
<comment type="function">
    <text evidence="1">NDH-1 shuttles electrons from an unknown electron donor, via FMN and iron-sulfur (Fe-S) centers, to quinones in the respiratory and/or the photosynthetic chain. The immediate electron acceptor for the enzyme in this species is believed to be plastoquinone. Couples the redox reaction to proton translocation, and thus conserves the redox energy in a proton gradient. Cyanobacterial NDH-1 also plays a role in inorganic carbon-concentration.</text>
</comment>
<comment type="catalytic activity">
    <reaction evidence="1">
        <text>a plastoquinone + NADH + (n+1) H(+)(in) = a plastoquinol + NAD(+) + n H(+)(out)</text>
        <dbReference type="Rhea" id="RHEA:42608"/>
        <dbReference type="Rhea" id="RHEA-COMP:9561"/>
        <dbReference type="Rhea" id="RHEA-COMP:9562"/>
        <dbReference type="ChEBI" id="CHEBI:15378"/>
        <dbReference type="ChEBI" id="CHEBI:17757"/>
        <dbReference type="ChEBI" id="CHEBI:57540"/>
        <dbReference type="ChEBI" id="CHEBI:57945"/>
        <dbReference type="ChEBI" id="CHEBI:62192"/>
    </reaction>
</comment>
<comment type="catalytic activity">
    <reaction evidence="1">
        <text>a plastoquinone + NADPH + (n+1) H(+)(in) = a plastoquinol + NADP(+) + n H(+)(out)</text>
        <dbReference type="Rhea" id="RHEA:42612"/>
        <dbReference type="Rhea" id="RHEA-COMP:9561"/>
        <dbReference type="Rhea" id="RHEA-COMP:9562"/>
        <dbReference type="ChEBI" id="CHEBI:15378"/>
        <dbReference type="ChEBI" id="CHEBI:17757"/>
        <dbReference type="ChEBI" id="CHEBI:57783"/>
        <dbReference type="ChEBI" id="CHEBI:58349"/>
        <dbReference type="ChEBI" id="CHEBI:62192"/>
    </reaction>
</comment>
<comment type="subunit">
    <text evidence="1">NDH-1 can be composed of about 15 different subunits; different subcomplexes with different compositions have been identified which probably have different functions.</text>
</comment>
<comment type="subcellular location">
    <subcellularLocation>
        <location evidence="1">Cellular thylakoid membrane</location>
        <topology evidence="1">Peripheral membrane protein</topology>
        <orientation evidence="1">Cytoplasmic side</orientation>
    </subcellularLocation>
</comment>
<comment type="similarity">
    <text evidence="1">Belongs to the complex I NdhN subunit family.</text>
</comment>
<keyword id="KW-0472">Membrane</keyword>
<keyword id="KW-0520">NAD</keyword>
<keyword id="KW-0521">NADP</keyword>
<keyword id="KW-0618">Plastoquinone</keyword>
<keyword id="KW-0874">Quinone</keyword>
<keyword id="KW-0793">Thylakoid</keyword>
<keyword id="KW-1278">Translocase</keyword>
<keyword id="KW-0813">Transport</keyword>
<dbReference type="EC" id="7.1.1.-" evidence="1"/>
<dbReference type="EMBL" id="CP000393">
    <property type="protein sequence ID" value="ABG52168.1"/>
    <property type="molecule type" value="Genomic_DNA"/>
</dbReference>
<dbReference type="RefSeq" id="WP_011612523.1">
    <property type="nucleotide sequence ID" value="NC_008312.1"/>
</dbReference>
<dbReference type="SMR" id="Q110A6"/>
<dbReference type="STRING" id="203124.Tery_3013"/>
<dbReference type="KEGG" id="ter:Tery_3013"/>
<dbReference type="eggNOG" id="ENOG502ZBMI">
    <property type="taxonomic scope" value="Bacteria"/>
</dbReference>
<dbReference type="HOGENOM" id="CLU_087432_0_0_3"/>
<dbReference type="OrthoDB" id="510798at2"/>
<dbReference type="GO" id="GO:0031676">
    <property type="term" value="C:plasma membrane-derived thylakoid membrane"/>
    <property type="evidence" value="ECO:0007669"/>
    <property type="project" value="UniProtKB-SubCell"/>
</dbReference>
<dbReference type="GO" id="GO:0016655">
    <property type="term" value="F:oxidoreductase activity, acting on NAD(P)H, quinone or similar compound as acceptor"/>
    <property type="evidence" value="ECO:0007669"/>
    <property type="project" value="UniProtKB-UniRule"/>
</dbReference>
<dbReference type="GO" id="GO:0048038">
    <property type="term" value="F:quinone binding"/>
    <property type="evidence" value="ECO:0007669"/>
    <property type="project" value="UniProtKB-KW"/>
</dbReference>
<dbReference type="HAMAP" id="MF_01353">
    <property type="entry name" value="NDH1_NDH1N"/>
    <property type="match status" value="1"/>
</dbReference>
<dbReference type="InterPro" id="IPR020874">
    <property type="entry name" value="NAD(P)H-quinone_OxRdtase_su_N"/>
</dbReference>
<dbReference type="PANTHER" id="PTHR35515">
    <property type="entry name" value="NAD(P)H-QUINONE OXIDOREDUCTASE SUBUNIT N, CHLOROPLASTIC"/>
    <property type="match status" value="1"/>
</dbReference>
<dbReference type="PANTHER" id="PTHR35515:SF1">
    <property type="entry name" value="NAD(P)H-QUINONE OXIDOREDUCTASE SUBUNIT N, CHLOROPLASTIC"/>
    <property type="match status" value="1"/>
</dbReference>
<dbReference type="Pfam" id="PF11909">
    <property type="entry name" value="NdhN"/>
    <property type="match status" value="1"/>
</dbReference>
<protein>
    <recommendedName>
        <fullName evidence="1">NAD(P)H-quinone oxidoreductase subunit N</fullName>
        <ecNumber evidence="1">7.1.1.-</ecNumber>
    </recommendedName>
    <alternativeName>
        <fullName evidence="1">NAD(P)H dehydrogenase I subunit N</fullName>
        <shortName evidence="1">NDH-1 subunit N</shortName>
        <shortName evidence="1">NDH-N</shortName>
    </alternativeName>
</protein>